<dbReference type="EC" id="3.4.21.104"/>
<dbReference type="EMBL" id="Y09926">
    <property type="protein sequence ID" value="CAA71059.1"/>
    <property type="molecule type" value="mRNA"/>
</dbReference>
<dbReference type="EMBL" id="AB008047">
    <property type="protein sequence ID" value="BAA78616.1"/>
    <property type="molecule type" value="mRNA"/>
</dbReference>
<dbReference type="EMBL" id="Y18281">
    <property type="protein sequence ID" value="CAB50728.1"/>
    <property type="molecule type" value="mRNA"/>
</dbReference>
<dbReference type="EMBL" id="Y18282">
    <property type="protein sequence ID" value="CAB50729.1"/>
    <property type="molecule type" value="mRNA"/>
</dbReference>
<dbReference type="EMBL" id="Y18283">
    <property type="protein sequence ID" value="CAB50730.1"/>
    <property type="molecule type" value="mRNA"/>
</dbReference>
<dbReference type="EMBL" id="Y18284">
    <property type="protein sequence ID" value="CAB50731.1"/>
    <property type="molecule type" value="mRNA"/>
</dbReference>
<dbReference type="EMBL" id="Y18286">
    <property type="protein sequence ID" value="CAB50732.1"/>
    <property type="molecule type" value="Genomic_DNA"/>
</dbReference>
<dbReference type="EMBL" id="Y18286">
    <property type="protein sequence ID" value="CAB50733.1"/>
    <property type="molecule type" value="Genomic_DNA"/>
</dbReference>
<dbReference type="EMBL" id="Y18287">
    <property type="protein sequence ID" value="CAB50734.1"/>
    <property type="molecule type" value="Genomic_DNA"/>
</dbReference>
<dbReference type="EMBL" id="Y18287">
    <property type="protein sequence ID" value="CAB50735.1"/>
    <property type="molecule type" value="Genomic_DNA"/>
</dbReference>
<dbReference type="EMBL" id="X98400">
    <property type="protein sequence ID" value="CAA67050.1"/>
    <property type="molecule type" value="mRNA"/>
</dbReference>
<dbReference type="EMBL" id="AB033742">
    <property type="protein sequence ID" value="BAA85658.1"/>
    <property type="molecule type" value="Genomic_DNA"/>
</dbReference>
<dbReference type="EMBL" id="AB033742">
    <property type="protein sequence ID" value="BAA85659.1"/>
    <property type="molecule type" value="Genomic_DNA"/>
</dbReference>
<dbReference type="EMBL" id="AF321558">
    <property type="protein sequence ID" value="AAG50275.1"/>
    <property type="molecule type" value="Genomic_DNA"/>
</dbReference>
<dbReference type="EMBL" id="AF321562">
    <property type="protein sequence ID" value="AAG50274.1"/>
    <property type="molecule type" value="Genomic_DNA"/>
</dbReference>
<dbReference type="EMBL" id="AF321558">
    <property type="protein sequence ID" value="AAG50274.1"/>
    <property type="status" value="JOINED"/>
    <property type="molecule type" value="Genomic_DNA"/>
</dbReference>
<dbReference type="EMBL" id="AF321559">
    <property type="protein sequence ID" value="AAG50274.1"/>
    <property type="status" value="JOINED"/>
    <property type="molecule type" value="Genomic_DNA"/>
</dbReference>
<dbReference type="EMBL" id="AF321560">
    <property type="protein sequence ID" value="AAG50274.1"/>
    <property type="status" value="JOINED"/>
    <property type="molecule type" value="Genomic_DNA"/>
</dbReference>
<dbReference type="EMBL" id="AF321561">
    <property type="protein sequence ID" value="AAG50274.1"/>
    <property type="status" value="JOINED"/>
    <property type="molecule type" value="Genomic_DNA"/>
</dbReference>
<dbReference type="EMBL" id="AK290823">
    <property type="protein sequence ID" value="BAF83512.1"/>
    <property type="molecule type" value="mRNA"/>
</dbReference>
<dbReference type="EMBL" id="AL109811">
    <property type="status" value="NOT_ANNOTATED_CDS"/>
    <property type="molecule type" value="Genomic_DNA"/>
</dbReference>
<dbReference type="EMBL" id="AJ297949">
    <property type="protein sequence ID" value="CAC17138.1"/>
    <property type="molecule type" value="Genomic_DNA"/>
</dbReference>
<dbReference type="EMBL" id="AJ297949">
    <property type="protein sequence ID" value="CAC17139.1"/>
    <property type="molecule type" value="Genomic_DNA"/>
</dbReference>
<dbReference type="EMBL" id="AJ300188">
    <property type="protein sequence ID" value="CAC15568.1"/>
    <property type="molecule type" value="Genomic_DNA"/>
</dbReference>
<dbReference type="CCDS" id="CCDS123.1">
    <molecule id="O00187-1"/>
</dbReference>
<dbReference type="CCDS" id="CCDS124.1">
    <molecule id="O00187-2"/>
</dbReference>
<dbReference type="PIR" id="A59271">
    <property type="entry name" value="A59271"/>
</dbReference>
<dbReference type="RefSeq" id="NP_006601.2">
    <molecule id="O00187-1"/>
    <property type="nucleotide sequence ID" value="NM_006610.3"/>
</dbReference>
<dbReference type="RefSeq" id="NP_631947.1">
    <molecule id="O00187-2"/>
    <property type="nucleotide sequence ID" value="NM_139208.3"/>
</dbReference>
<dbReference type="PDB" id="1Q3X">
    <property type="method" value="X-ray"/>
    <property type="resolution" value="2.23 A"/>
    <property type="chains" value="A/B=363-686"/>
</dbReference>
<dbReference type="PDB" id="1SZB">
    <property type="method" value="X-ray"/>
    <property type="resolution" value="2.50 A"/>
    <property type="chains" value="A/B=16-181"/>
</dbReference>
<dbReference type="PDB" id="1ZJK">
    <property type="method" value="X-ray"/>
    <property type="resolution" value="2.18 A"/>
    <property type="chains" value="A=287-686"/>
</dbReference>
<dbReference type="PDB" id="3TVJ">
    <property type="method" value="X-ray"/>
    <property type="resolution" value="1.28 A"/>
    <property type="chains" value="A=363-444, B=445-686"/>
</dbReference>
<dbReference type="PDB" id="5JPM">
    <property type="method" value="X-ray"/>
    <property type="resolution" value="3.75 A"/>
    <property type="chains" value="G/I=291-444, H/J=445-686"/>
</dbReference>
<dbReference type="PDBsum" id="1Q3X"/>
<dbReference type="PDBsum" id="1SZB"/>
<dbReference type="PDBsum" id="1ZJK"/>
<dbReference type="PDBsum" id="3TVJ"/>
<dbReference type="PDBsum" id="5JPM"/>
<dbReference type="SMR" id="O00187"/>
<dbReference type="BioGRID" id="115970">
    <property type="interactions" value="22"/>
</dbReference>
<dbReference type="ComplexPortal" id="CPX-6203">
    <property type="entry name" value="MBL2-MASP2 lectin-protease complex"/>
</dbReference>
<dbReference type="ComplexPortal" id="CPX-6237">
    <property type="entry name" value="FCN1-MASP2 lectin-protease complex"/>
</dbReference>
<dbReference type="ComplexPortal" id="CPX-6238">
    <property type="entry name" value="FCN2-MASP2 lectin-protease complex"/>
</dbReference>
<dbReference type="ComplexPortal" id="CPX-6239">
    <property type="entry name" value="FCN3-MASP2 lectin-protease complex"/>
</dbReference>
<dbReference type="ComplexPortal" id="CPX-6240">
    <property type="entry name" value="CL-LK-MASP2 lectin-protease complex"/>
</dbReference>
<dbReference type="CORUM" id="O00187"/>
<dbReference type="FunCoup" id="O00187">
    <property type="interactions" value="200"/>
</dbReference>
<dbReference type="IntAct" id="O00187">
    <property type="interactions" value="17"/>
</dbReference>
<dbReference type="MINT" id="O00187"/>
<dbReference type="STRING" id="9606.ENSP00000383690"/>
<dbReference type="BindingDB" id="O00187"/>
<dbReference type="ChEMBL" id="CHEMBL4295646"/>
<dbReference type="DrugBank" id="DB04527">
    <property type="generic name" value="beta-Hydroxyasparagine"/>
</dbReference>
<dbReference type="DrugBank" id="DB16418">
    <property type="generic name" value="Narsoplimab"/>
</dbReference>
<dbReference type="MEROPS" id="S01.229"/>
<dbReference type="GlyGen" id="O00187">
    <property type="glycosylation" value="1 site, 1 N-linked glycan (1 site)"/>
</dbReference>
<dbReference type="iPTMnet" id="O00187"/>
<dbReference type="PhosphoSitePlus" id="O00187"/>
<dbReference type="BioMuta" id="MASP2"/>
<dbReference type="CPTAC" id="non-CPTAC-2683"/>
<dbReference type="MassIVE" id="O00187"/>
<dbReference type="PaxDb" id="9606-ENSP00000383690"/>
<dbReference type="PeptideAtlas" id="O00187"/>
<dbReference type="ProteomicsDB" id="47767">
    <molecule id="O00187-1"/>
</dbReference>
<dbReference type="ProteomicsDB" id="47768">
    <molecule id="O00187-2"/>
</dbReference>
<dbReference type="ABCD" id="O00187">
    <property type="antibodies" value="10 sequenced antibodies"/>
</dbReference>
<dbReference type="Antibodypedia" id="27998">
    <property type="antibodies" value="399 antibodies from 28 providers"/>
</dbReference>
<dbReference type="DNASU" id="10747"/>
<dbReference type="Ensembl" id="ENST00000400897.8">
    <molecule id="O00187-1"/>
    <property type="protein sequence ID" value="ENSP00000383690.3"/>
    <property type="gene ID" value="ENSG00000009724.18"/>
</dbReference>
<dbReference type="Ensembl" id="ENST00000400898.3">
    <molecule id="O00187-2"/>
    <property type="protein sequence ID" value="ENSP00000383691.3"/>
    <property type="gene ID" value="ENSG00000009724.18"/>
</dbReference>
<dbReference type="GeneID" id="10747"/>
<dbReference type="KEGG" id="hsa:10747"/>
<dbReference type="MANE-Select" id="ENST00000400897.8">
    <property type="protein sequence ID" value="ENSP00000383690.3"/>
    <property type="RefSeq nucleotide sequence ID" value="NM_006610.4"/>
    <property type="RefSeq protein sequence ID" value="NP_006601.2"/>
</dbReference>
<dbReference type="UCSC" id="uc001aru.4">
    <molecule id="O00187-1"/>
    <property type="organism name" value="human"/>
</dbReference>
<dbReference type="AGR" id="HGNC:6902"/>
<dbReference type="CTD" id="10747"/>
<dbReference type="DisGeNET" id="10747"/>
<dbReference type="GeneCards" id="MASP2"/>
<dbReference type="HGNC" id="HGNC:6902">
    <property type="gene designation" value="MASP2"/>
</dbReference>
<dbReference type="HPA" id="ENSG00000009724">
    <property type="expression patterns" value="Tissue enriched (liver)"/>
</dbReference>
<dbReference type="MalaCards" id="MASP2"/>
<dbReference type="MIM" id="605102">
    <property type="type" value="gene"/>
</dbReference>
<dbReference type="MIM" id="613791">
    <property type="type" value="phenotype"/>
</dbReference>
<dbReference type="neXtProt" id="NX_O00187"/>
<dbReference type="OpenTargets" id="ENSG00000009724"/>
<dbReference type="Orphanet" id="331187">
    <property type="disease" value="Immunodeficiency due to MASP-2 deficiency"/>
</dbReference>
<dbReference type="PharmGKB" id="PA30645"/>
<dbReference type="VEuPathDB" id="HostDB:ENSG00000009724"/>
<dbReference type="eggNOG" id="KOG3627">
    <property type="taxonomic scope" value="Eukaryota"/>
</dbReference>
<dbReference type="GeneTree" id="ENSGT00950000183084"/>
<dbReference type="HOGENOM" id="CLU_006842_14_1_1"/>
<dbReference type="InParanoid" id="O00187"/>
<dbReference type="OMA" id="YTCAHDG"/>
<dbReference type="OrthoDB" id="9985152at2759"/>
<dbReference type="PAN-GO" id="O00187">
    <property type="GO annotations" value="3 GO annotations based on evolutionary models"/>
</dbReference>
<dbReference type="PhylomeDB" id="O00187"/>
<dbReference type="TreeFam" id="TF330373"/>
<dbReference type="BRENDA" id="3.4.21.104">
    <property type="organism ID" value="2681"/>
</dbReference>
<dbReference type="PathwayCommons" id="O00187"/>
<dbReference type="Reactome" id="R-HSA-166662">
    <molecule id="O00187-1"/>
    <property type="pathway name" value="Lectin pathway of complement activation"/>
</dbReference>
<dbReference type="Reactome" id="R-HSA-166663">
    <molecule id="O00187-1"/>
    <property type="pathway name" value="Initial triggering of complement"/>
</dbReference>
<dbReference type="Reactome" id="R-HSA-2855086">
    <molecule id="O00187-1"/>
    <property type="pathway name" value="Ficolins bind to repetitive carbohydrate structures on the target cell surface"/>
</dbReference>
<dbReference type="Reactome" id="R-HSA-9705671">
    <molecule id="O00187-1"/>
    <property type="pathway name" value="SARS-CoV-2 activates/modulates innate and adaptive immune responses"/>
</dbReference>
<dbReference type="SABIO-RK" id="O00187"/>
<dbReference type="SignaLink" id="O00187"/>
<dbReference type="SIGNOR" id="O00187"/>
<dbReference type="BioGRID-ORCS" id="10747">
    <property type="hits" value="18 hits in 1153 CRISPR screens"/>
</dbReference>
<dbReference type="EvolutionaryTrace" id="O00187"/>
<dbReference type="GenomeRNAi" id="10747"/>
<dbReference type="Pharos" id="O00187">
    <property type="development level" value="Tchem"/>
</dbReference>
<dbReference type="PRO" id="PR:O00187"/>
<dbReference type="Proteomes" id="UP000005640">
    <property type="component" value="Chromosome 1"/>
</dbReference>
<dbReference type="RNAct" id="O00187">
    <property type="molecule type" value="protein"/>
</dbReference>
<dbReference type="Bgee" id="ENSG00000009724">
    <property type="expression patterns" value="Expressed in right lobe of liver and 103 other cell types or tissues"/>
</dbReference>
<dbReference type="GO" id="GO:0070062">
    <property type="term" value="C:extracellular exosome"/>
    <property type="evidence" value="ECO:0007005"/>
    <property type="project" value="UniProtKB"/>
</dbReference>
<dbReference type="GO" id="GO:0005576">
    <property type="term" value="C:extracellular region"/>
    <property type="evidence" value="ECO:0000304"/>
    <property type="project" value="Reactome"/>
</dbReference>
<dbReference type="GO" id="GO:0005615">
    <property type="term" value="C:extracellular space"/>
    <property type="evidence" value="ECO:0000318"/>
    <property type="project" value="GO_Central"/>
</dbReference>
<dbReference type="GO" id="GO:0005509">
    <property type="term" value="F:calcium ion binding"/>
    <property type="evidence" value="ECO:0007669"/>
    <property type="project" value="InterPro"/>
</dbReference>
<dbReference type="GO" id="GO:0048306">
    <property type="term" value="F:calcium-dependent protein binding"/>
    <property type="evidence" value="ECO:0000353"/>
    <property type="project" value="UniProtKB"/>
</dbReference>
<dbReference type="GO" id="GO:0001855">
    <property type="term" value="F:complement component C4b binding"/>
    <property type="evidence" value="ECO:0000314"/>
    <property type="project" value="BHF-UCL"/>
</dbReference>
<dbReference type="GO" id="GO:0042802">
    <property type="term" value="F:identical protein binding"/>
    <property type="evidence" value="ECO:0000353"/>
    <property type="project" value="IntAct"/>
</dbReference>
<dbReference type="GO" id="GO:0008233">
    <property type="term" value="F:peptidase activity"/>
    <property type="evidence" value="ECO:0000314"/>
    <property type="project" value="UniProtKB"/>
</dbReference>
<dbReference type="GO" id="GO:0004252">
    <property type="term" value="F:serine-type endopeptidase activity"/>
    <property type="evidence" value="ECO:0000314"/>
    <property type="project" value="UniProtKB"/>
</dbReference>
<dbReference type="GO" id="GO:0006958">
    <property type="term" value="P:complement activation, classical pathway"/>
    <property type="evidence" value="ECO:0007669"/>
    <property type="project" value="UniProtKB-KW"/>
</dbReference>
<dbReference type="GO" id="GO:0001867">
    <property type="term" value="P:complement activation, lectin pathway"/>
    <property type="evidence" value="ECO:0000314"/>
    <property type="project" value="UniProtKB"/>
</dbReference>
<dbReference type="GO" id="GO:0006508">
    <property type="term" value="P:proteolysis"/>
    <property type="evidence" value="ECO:0007669"/>
    <property type="project" value="UniProtKB-KW"/>
</dbReference>
<dbReference type="CDD" id="cd00033">
    <property type="entry name" value="CCP"/>
    <property type="match status" value="1"/>
</dbReference>
<dbReference type="CDD" id="cd00041">
    <property type="entry name" value="CUB"/>
    <property type="match status" value="2"/>
</dbReference>
<dbReference type="CDD" id="cd00054">
    <property type="entry name" value="EGF_CA"/>
    <property type="match status" value="1"/>
</dbReference>
<dbReference type="CDD" id="cd00190">
    <property type="entry name" value="Tryp_SPc"/>
    <property type="match status" value="1"/>
</dbReference>
<dbReference type="FunFam" id="2.10.25.10:FF:000059">
    <property type="entry name" value="Mannan-binding lectin serine protease 1"/>
    <property type="match status" value="1"/>
</dbReference>
<dbReference type="FunFam" id="2.10.70.10:FF:000016">
    <property type="entry name" value="Mannan-binding lectin serine protease 1"/>
    <property type="match status" value="1"/>
</dbReference>
<dbReference type="FunFam" id="2.60.120.290:FF:000006">
    <property type="entry name" value="Mannan-binding lectin serine protease 1"/>
    <property type="match status" value="1"/>
</dbReference>
<dbReference type="FunFam" id="2.60.120.290:FF:000012">
    <property type="entry name" value="mannan-binding lectin serine protease 1 isoform X1"/>
    <property type="match status" value="1"/>
</dbReference>
<dbReference type="FunFam" id="2.10.70.10:FF:000084">
    <property type="entry name" value="Mannan-binding lectin serine protease 2"/>
    <property type="match status" value="1"/>
</dbReference>
<dbReference type="FunFam" id="2.40.10.10:FF:000089">
    <property type="entry name" value="Mannan-binding lectin serine protease 2"/>
    <property type="match status" value="1"/>
</dbReference>
<dbReference type="Gene3D" id="2.10.70.10">
    <property type="entry name" value="Complement Module, domain 1"/>
    <property type="match status" value="2"/>
</dbReference>
<dbReference type="Gene3D" id="2.10.25.10">
    <property type="entry name" value="Laminin"/>
    <property type="match status" value="1"/>
</dbReference>
<dbReference type="Gene3D" id="2.60.120.290">
    <property type="entry name" value="Spermadhesin, CUB domain"/>
    <property type="match status" value="2"/>
</dbReference>
<dbReference type="Gene3D" id="2.40.10.10">
    <property type="entry name" value="Trypsin-like serine proteases"/>
    <property type="match status" value="2"/>
</dbReference>
<dbReference type="InterPro" id="IPR000859">
    <property type="entry name" value="CUB_dom"/>
</dbReference>
<dbReference type="InterPro" id="IPR001881">
    <property type="entry name" value="EGF-like_Ca-bd_dom"/>
</dbReference>
<dbReference type="InterPro" id="IPR000742">
    <property type="entry name" value="EGF-like_dom"/>
</dbReference>
<dbReference type="InterPro" id="IPR000152">
    <property type="entry name" value="EGF-type_Asp/Asn_hydroxyl_site"/>
</dbReference>
<dbReference type="InterPro" id="IPR018097">
    <property type="entry name" value="EGF_Ca-bd_CS"/>
</dbReference>
<dbReference type="InterPro" id="IPR049883">
    <property type="entry name" value="NOTCH1_EGF-like"/>
</dbReference>
<dbReference type="InterPro" id="IPR024175">
    <property type="entry name" value="Pept_S1A_C1r/C1S/mannan-bd"/>
</dbReference>
<dbReference type="InterPro" id="IPR009003">
    <property type="entry name" value="Peptidase_S1_PA"/>
</dbReference>
<dbReference type="InterPro" id="IPR043504">
    <property type="entry name" value="Peptidase_S1_PA_chymotrypsin"/>
</dbReference>
<dbReference type="InterPro" id="IPR001314">
    <property type="entry name" value="Peptidase_S1A"/>
</dbReference>
<dbReference type="InterPro" id="IPR035914">
    <property type="entry name" value="Sperma_CUB_dom_sf"/>
</dbReference>
<dbReference type="InterPro" id="IPR035976">
    <property type="entry name" value="Sushi/SCR/CCP_sf"/>
</dbReference>
<dbReference type="InterPro" id="IPR000436">
    <property type="entry name" value="Sushi_SCR_CCP_dom"/>
</dbReference>
<dbReference type="InterPro" id="IPR001254">
    <property type="entry name" value="Trypsin_dom"/>
</dbReference>
<dbReference type="InterPro" id="IPR033116">
    <property type="entry name" value="TRYPSIN_SER"/>
</dbReference>
<dbReference type="PANTHER" id="PTHR24255">
    <property type="entry name" value="COMPLEMENT COMPONENT 1, S SUBCOMPONENT-RELATED"/>
    <property type="match status" value="1"/>
</dbReference>
<dbReference type="PANTHER" id="PTHR24255:SF10">
    <property type="entry name" value="MANNAN-BINDING LECTIN SERINE PROTEASE 2"/>
    <property type="match status" value="1"/>
</dbReference>
<dbReference type="Pfam" id="PF00431">
    <property type="entry name" value="CUB"/>
    <property type="match status" value="2"/>
</dbReference>
<dbReference type="Pfam" id="PF07645">
    <property type="entry name" value="EGF_CA"/>
    <property type="match status" value="1"/>
</dbReference>
<dbReference type="Pfam" id="PF00084">
    <property type="entry name" value="Sushi"/>
    <property type="match status" value="2"/>
</dbReference>
<dbReference type="Pfam" id="PF00089">
    <property type="entry name" value="Trypsin"/>
    <property type="match status" value="1"/>
</dbReference>
<dbReference type="PIRSF" id="PIRSF001155">
    <property type="entry name" value="C1r_C1s_MASP"/>
    <property type="match status" value="1"/>
</dbReference>
<dbReference type="PRINTS" id="PR00722">
    <property type="entry name" value="CHYMOTRYPSIN"/>
</dbReference>
<dbReference type="SMART" id="SM00032">
    <property type="entry name" value="CCP"/>
    <property type="match status" value="2"/>
</dbReference>
<dbReference type="SMART" id="SM00042">
    <property type="entry name" value="CUB"/>
    <property type="match status" value="2"/>
</dbReference>
<dbReference type="SMART" id="SM00181">
    <property type="entry name" value="EGF"/>
    <property type="match status" value="1"/>
</dbReference>
<dbReference type="SMART" id="SM00179">
    <property type="entry name" value="EGF_CA"/>
    <property type="match status" value="1"/>
</dbReference>
<dbReference type="SMART" id="SM00020">
    <property type="entry name" value="Tryp_SPc"/>
    <property type="match status" value="1"/>
</dbReference>
<dbReference type="SUPFAM" id="SSF57535">
    <property type="entry name" value="Complement control module/SCR domain"/>
    <property type="match status" value="2"/>
</dbReference>
<dbReference type="SUPFAM" id="SSF57196">
    <property type="entry name" value="EGF/Laminin"/>
    <property type="match status" value="1"/>
</dbReference>
<dbReference type="SUPFAM" id="SSF49854">
    <property type="entry name" value="Spermadhesin, CUB domain"/>
    <property type="match status" value="2"/>
</dbReference>
<dbReference type="SUPFAM" id="SSF50494">
    <property type="entry name" value="Trypsin-like serine proteases"/>
    <property type="match status" value="1"/>
</dbReference>
<dbReference type="PROSITE" id="PS00010">
    <property type="entry name" value="ASX_HYDROXYL"/>
    <property type="match status" value="1"/>
</dbReference>
<dbReference type="PROSITE" id="PS01180">
    <property type="entry name" value="CUB"/>
    <property type="match status" value="2"/>
</dbReference>
<dbReference type="PROSITE" id="PS01186">
    <property type="entry name" value="EGF_2"/>
    <property type="match status" value="1"/>
</dbReference>
<dbReference type="PROSITE" id="PS01187">
    <property type="entry name" value="EGF_CA"/>
    <property type="match status" value="1"/>
</dbReference>
<dbReference type="PROSITE" id="PS50923">
    <property type="entry name" value="SUSHI"/>
    <property type="match status" value="2"/>
</dbReference>
<dbReference type="PROSITE" id="PS50240">
    <property type="entry name" value="TRYPSIN_DOM"/>
    <property type="match status" value="1"/>
</dbReference>
<dbReference type="PROSITE" id="PS00135">
    <property type="entry name" value="TRYPSIN_SER"/>
    <property type="match status" value="1"/>
</dbReference>
<evidence type="ECO:0000250" key="1"/>
<evidence type="ECO:0000255" key="2"/>
<evidence type="ECO:0000255" key="3">
    <source>
        <dbReference type="PROSITE-ProRule" id="PRU00059"/>
    </source>
</evidence>
<evidence type="ECO:0000255" key="4">
    <source>
        <dbReference type="PROSITE-ProRule" id="PRU00274"/>
    </source>
</evidence>
<evidence type="ECO:0000255" key="5">
    <source>
        <dbReference type="PROSITE-ProRule" id="PRU00302"/>
    </source>
</evidence>
<evidence type="ECO:0000269" key="6">
    <source>
    </source>
</evidence>
<evidence type="ECO:0000269" key="7">
    <source>
    </source>
</evidence>
<evidence type="ECO:0000269" key="8">
    <source>
    </source>
</evidence>
<evidence type="ECO:0000269" key="9">
    <source>
    </source>
</evidence>
<evidence type="ECO:0000269" key="10">
    <source>
    </source>
</evidence>
<evidence type="ECO:0000269" key="11">
    <source>
    </source>
</evidence>
<evidence type="ECO:0000269" key="12">
    <source>
    </source>
</evidence>
<evidence type="ECO:0000269" key="13">
    <source>
    </source>
</evidence>
<evidence type="ECO:0000269" key="14">
    <source>
    </source>
</evidence>
<evidence type="ECO:0000269" key="15">
    <source ref="5"/>
</evidence>
<evidence type="ECO:0000303" key="16">
    <source>
    </source>
</evidence>
<evidence type="ECO:0000303" key="17">
    <source>
    </source>
</evidence>
<evidence type="ECO:0000305" key="18"/>
<evidence type="ECO:0007829" key="19">
    <source>
        <dbReference type="PDB" id="1SZB"/>
    </source>
</evidence>
<evidence type="ECO:0007829" key="20">
    <source>
        <dbReference type="PDB" id="1ZJK"/>
    </source>
</evidence>
<evidence type="ECO:0007829" key="21">
    <source>
        <dbReference type="PDB" id="3TVJ"/>
    </source>
</evidence>
<sequence>MRLLTLLGLLCGSVATPLGPKWPEPVFGRLASPGFPGEYANDQERRWTLTAPPGYRLRLYFTHFDLELSHLCEYDFVKLSSGAKVLATLCGQESTDTERAPGKDTFYSLGSSLDITFRSDYSNEKPFTGFEAFYAAEDIDECQVAPGEAPTCDHHCHNHLGGFYCSCRAGYVLHRNKRTCSALCSGQVFTQRSGELSSPEYPRPYPKLSSCTYSISLEEGFSVILDFVESFDVETHPETLCPYDFLKIQTDREEHGPFCGKTLPHRIETKSNTVTITFVTDESGDHTGWKIHYTSTAQPCPYPMAPPNGHVSPVQAKYILKDSFSIFCETGYELLQGHLPLKSFTAVCQKDGSWDRPMPACSIVDCGPPDDLPSGRVEYITGPGVTTYKAVIQYSCEETFYTMKVNDGKYVCEADGFWTSSKGEKSLPVCEPVCGLSARTTGGRIYGGQKAKPGDFPWQVLILGGTTAAGALLYDNWVLTAAHAVYEQKHDASALDIRMGTLKRLSPHYTQAWSEAVFIHEGYTHDAGFDNDIALIKLNNKVVINSNITPICLPRKEAESFMRTDDIGTASGWGLTQRGFLARNLMYVDIPIVDHQKCTAAYEKPPYPRGSVTANMLCAGLESGGKDSCRGDSGGALVFLDSETERWFVGGIVSWGSMNCGEAGQYGVYTKVINYIPWIENIISDF</sequence>
<reference key="1">
    <citation type="journal article" date="1997" name="Nature">
        <title>A second serine protease associated with mannan-binding lectin that activates complement.</title>
        <authorList>
            <person name="Thiel S."/>
            <person name="Vorup-Jensen T."/>
            <person name="Stover C.M."/>
            <person name="Schwaeble W.J."/>
            <person name="Laursen S.B."/>
            <person name="Poulsen K."/>
            <person name="Willis A.C."/>
            <person name="Eggleton P."/>
            <person name="Hansen S."/>
            <person name="Holmskov U."/>
            <person name="Reid K.B.M."/>
            <person name="Jensenius J.C."/>
        </authorList>
    </citation>
    <scope>NUCLEOTIDE SEQUENCE [MRNA] (ISOFORM 1)</scope>
    <source>
        <tissue>Liver</tissue>
    </source>
</reference>
<reference key="2">
    <citation type="journal article" date="1999" name="Int. Immunol.">
        <title>A truncated form of mannose-binding lectin-associated serine protease (MASP)-2 expressed by alternative polyadenylation is a component of the lectin complement pathway.</title>
        <authorList>
            <person name="Takahashi M."/>
            <person name="Endo Y."/>
            <person name="Fujita T."/>
            <person name="Matsushita M."/>
        </authorList>
    </citation>
    <scope>NUCLEOTIDE SEQUENCE [GENOMIC DNA / MRNA] (ISOFORM 2)</scope>
</reference>
<reference key="3">
    <citation type="journal article" date="1999" name="J. Immunol.">
        <title>Two constituents of the initiation complex of the mannan-binding lectin activation pathway of complement are encoded by a single structural gene.</title>
        <authorList>
            <person name="Stover C.M."/>
            <person name="Thiel S."/>
            <person name="Thelen M."/>
            <person name="Lynch N.J."/>
            <person name="Vorup-Jensen T."/>
            <person name="Jensenius J.C."/>
            <person name="Schwaeble W.J."/>
        </authorList>
    </citation>
    <scope>NUCLEOTIDE SEQUENCE [GENOMIC DNA / MRNA] (ISOFORMS 1 AND 2)</scope>
    <scope>ACTIVATION BY PROTEOLYTIC CLEAVAGE</scope>
    <scope>IDENTIFICATION BY MASS SPECTROMETRY</scope>
    <source>
        <tissue>Liver</tissue>
    </source>
</reference>
<reference key="4">
    <citation type="submission" date="1998-07" db="EMBL/GenBank/DDBJ databases">
        <title>Identification and characterization of a novel protein of the human complement system, mannan-binding lectin-associated serine protease-2 (MASP-2).</title>
        <authorList>
            <person name="Thiel S."/>
            <person name="Vorup-Jensen T."/>
            <person name="Stover C.M."/>
            <person name="Schwaeble W."/>
            <person name="Laursen S.B."/>
            <person name="Poulsen K."/>
            <person name="Willis A.C."/>
            <person name="Eggleton P."/>
            <person name="Hansen S."/>
            <person name="Holmskov U."/>
            <person name="Reid K.B.M."/>
            <person name="Jensenius J.C."/>
        </authorList>
    </citation>
    <scope>NUCLEOTIDE SEQUENCE [MRNA] (ISOFORM 1)</scope>
</reference>
<reference key="5">
    <citation type="submission" date="1999-10" db="EMBL/GenBank/DDBJ databases">
        <title>Partial genomic structure of human MBL-associated serine protease (MASP)-2 (from exon 1 to exon 5).</title>
        <authorList>
            <person name="Takahashi M."/>
            <person name="Fujita T."/>
        </authorList>
    </citation>
    <scope>NUCLEOTIDE SEQUENCE [GENOMIC DNA]</scope>
    <scope>VARIANT TYR-371</scope>
</reference>
<reference key="6">
    <citation type="submission" date="2000-11" db="EMBL/GenBank/DDBJ databases">
        <title>Structure of human MASP-2 gene.</title>
        <authorList>
            <person name="Park D."/>
            <person name="Kim B."/>
            <person name="Baek K."/>
            <person name="Yoon J."/>
        </authorList>
    </citation>
    <scope>NUCLEOTIDE SEQUENCE [GENOMIC DNA]</scope>
</reference>
<reference key="7">
    <citation type="journal article" date="2004" name="Nat. Genet.">
        <title>Complete sequencing and characterization of 21,243 full-length human cDNAs.</title>
        <authorList>
            <person name="Ota T."/>
            <person name="Suzuki Y."/>
            <person name="Nishikawa T."/>
            <person name="Otsuki T."/>
            <person name="Sugiyama T."/>
            <person name="Irie R."/>
            <person name="Wakamatsu A."/>
            <person name="Hayashi K."/>
            <person name="Sato H."/>
            <person name="Nagai K."/>
            <person name="Kimura K."/>
            <person name="Makita H."/>
            <person name="Sekine M."/>
            <person name="Obayashi M."/>
            <person name="Nishi T."/>
            <person name="Shibahara T."/>
            <person name="Tanaka T."/>
            <person name="Ishii S."/>
            <person name="Yamamoto J."/>
            <person name="Saito K."/>
            <person name="Kawai Y."/>
            <person name="Isono Y."/>
            <person name="Nakamura Y."/>
            <person name="Nagahari K."/>
            <person name="Murakami K."/>
            <person name="Yasuda T."/>
            <person name="Iwayanagi T."/>
            <person name="Wagatsuma M."/>
            <person name="Shiratori A."/>
            <person name="Sudo H."/>
            <person name="Hosoiri T."/>
            <person name="Kaku Y."/>
            <person name="Kodaira H."/>
            <person name="Kondo H."/>
            <person name="Sugawara M."/>
            <person name="Takahashi M."/>
            <person name="Kanda K."/>
            <person name="Yokoi T."/>
            <person name="Furuya T."/>
            <person name="Kikkawa E."/>
            <person name="Omura Y."/>
            <person name="Abe K."/>
            <person name="Kamihara K."/>
            <person name="Katsuta N."/>
            <person name="Sato K."/>
            <person name="Tanikawa M."/>
            <person name="Yamazaki M."/>
            <person name="Ninomiya K."/>
            <person name="Ishibashi T."/>
            <person name="Yamashita H."/>
            <person name="Murakawa K."/>
            <person name="Fujimori K."/>
            <person name="Tanai H."/>
            <person name="Kimata M."/>
            <person name="Watanabe M."/>
            <person name="Hiraoka S."/>
            <person name="Chiba Y."/>
            <person name="Ishida S."/>
            <person name="Ono Y."/>
            <person name="Takiguchi S."/>
            <person name="Watanabe S."/>
            <person name="Yosida M."/>
            <person name="Hotuta T."/>
            <person name="Kusano J."/>
            <person name="Kanehori K."/>
            <person name="Takahashi-Fujii A."/>
            <person name="Hara H."/>
            <person name="Tanase T.-O."/>
            <person name="Nomura Y."/>
            <person name="Togiya S."/>
            <person name="Komai F."/>
            <person name="Hara R."/>
            <person name="Takeuchi K."/>
            <person name="Arita M."/>
            <person name="Imose N."/>
            <person name="Musashino K."/>
            <person name="Yuuki H."/>
            <person name="Oshima A."/>
            <person name="Sasaki N."/>
            <person name="Aotsuka S."/>
            <person name="Yoshikawa Y."/>
            <person name="Matsunawa H."/>
            <person name="Ichihara T."/>
            <person name="Shiohata N."/>
            <person name="Sano S."/>
            <person name="Moriya S."/>
            <person name="Momiyama H."/>
            <person name="Satoh N."/>
            <person name="Takami S."/>
            <person name="Terashima Y."/>
            <person name="Suzuki O."/>
            <person name="Nakagawa S."/>
            <person name="Senoh A."/>
            <person name="Mizoguchi H."/>
            <person name="Goto Y."/>
            <person name="Shimizu F."/>
            <person name="Wakebe H."/>
            <person name="Hishigaki H."/>
            <person name="Watanabe T."/>
            <person name="Sugiyama A."/>
            <person name="Takemoto M."/>
            <person name="Kawakami B."/>
            <person name="Yamazaki M."/>
            <person name="Watanabe K."/>
            <person name="Kumagai A."/>
            <person name="Itakura S."/>
            <person name="Fukuzumi Y."/>
            <person name="Fujimori Y."/>
            <person name="Komiyama M."/>
            <person name="Tashiro H."/>
            <person name="Tanigami A."/>
            <person name="Fujiwara T."/>
            <person name="Ono T."/>
            <person name="Yamada K."/>
            <person name="Fujii Y."/>
            <person name="Ozaki K."/>
            <person name="Hirao M."/>
            <person name="Ohmori Y."/>
            <person name="Kawabata A."/>
            <person name="Hikiji T."/>
            <person name="Kobatake N."/>
            <person name="Inagaki H."/>
            <person name="Ikema Y."/>
            <person name="Okamoto S."/>
            <person name="Okitani R."/>
            <person name="Kawakami T."/>
            <person name="Noguchi S."/>
            <person name="Itoh T."/>
            <person name="Shigeta K."/>
            <person name="Senba T."/>
            <person name="Matsumura K."/>
            <person name="Nakajima Y."/>
            <person name="Mizuno T."/>
            <person name="Morinaga M."/>
            <person name="Sasaki M."/>
            <person name="Togashi T."/>
            <person name="Oyama M."/>
            <person name="Hata H."/>
            <person name="Watanabe M."/>
            <person name="Komatsu T."/>
            <person name="Mizushima-Sugano J."/>
            <person name="Satoh T."/>
            <person name="Shirai Y."/>
            <person name="Takahashi Y."/>
            <person name="Nakagawa K."/>
            <person name="Okumura K."/>
            <person name="Nagase T."/>
            <person name="Nomura N."/>
            <person name="Kikuchi H."/>
            <person name="Masuho Y."/>
            <person name="Yamashita R."/>
            <person name="Nakai K."/>
            <person name="Yada T."/>
            <person name="Nakamura Y."/>
            <person name="Ohara O."/>
            <person name="Isogai T."/>
            <person name="Sugano S."/>
        </authorList>
    </citation>
    <scope>NUCLEOTIDE SEQUENCE [LARGE SCALE MRNA]</scope>
    <source>
        <tissue>Liver</tissue>
    </source>
</reference>
<reference key="8">
    <citation type="journal article" date="2006" name="Nature">
        <title>The DNA sequence and biological annotation of human chromosome 1.</title>
        <authorList>
            <person name="Gregory S.G."/>
            <person name="Barlow K.F."/>
            <person name="McLay K.E."/>
            <person name="Kaul R."/>
            <person name="Swarbreck D."/>
            <person name="Dunham A."/>
            <person name="Scott C.E."/>
            <person name="Howe K.L."/>
            <person name="Woodfine K."/>
            <person name="Spencer C.C.A."/>
            <person name="Jones M.C."/>
            <person name="Gillson C."/>
            <person name="Searle S."/>
            <person name="Zhou Y."/>
            <person name="Kokocinski F."/>
            <person name="McDonald L."/>
            <person name="Evans R."/>
            <person name="Phillips K."/>
            <person name="Atkinson A."/>
            <person name="Cooper R."/>
            <person name="Jones C."/>
            <person name="Hall R.E."/>
            <person name="Andrews T.D."/>
            <person name="Lloyd C."/>
            <person name="Ainscough R."/>
            <person name="Almeida J.P."/>
            <person name="Ambrose K.D."/>
            <person name="Anderson F."/>
            <person name="Andrew R.W."/>
            <person name="Ashwell R.I.S."/>
            <person name="Aubin K."/>
            <person name="Babbage A.K."/>
            <person name="Bagguley C.L."/>
            <person name="Bailey J."/>
            <person name="Beasley H."/>
            <person name="Bethel G."/>
            <person name="Bird C.P."/>
            <person name="Bray-Allen S."/>
            <person name="Brown J.Y."/>
            <person name="Brown A.J."/>
            <person name="Buckley D."/>
            <person name="Burton J."/>
            <person name="Bye J."/>
            <person name="Carder C."/>
            <person name="Chapman J.C."/>
            <person name="Clark S.Y."/>
            <person name="Clarke G."/>
            <person name="Clee C."/>
            <person name="Cobley V."/>
            <person name="Collier R.E."/>
            <person name="Corby N."/>
            <person name="Coville G.J."/>
            <person name="Davies J."/>
            <person name="Deadman R."/>
            <person name="Dunn M."/>
            <person name="Earthrowl M."/>
            <person name="Ellington A.G."/>
            <person name="Errington H."/>
            <person name="Frankish A."/>
            <person name="Frankland J."/>
            <person name="French L."/>
            <person name="Garner P."/>
            <person name="Garnett J."/>
            <person name="Gay L."/>
            <person name="Ghori M.R.J."/>
            <person name="Gibson R."/>
            <person name="Gilby L.M."/>
            <person name="Gillett W."/>
            <person name="Glithero R.J."/>
            <person name="Grafham D.V."/>
            <person name="Griffiths C."/>
            <person name="Griffiths-Jones S."/>
            <person name="Grocock R."/>
            <person name="Hammond S."/>
            <person name="Harrison E.S.I."/>
            <person name="Hart E."/>
            <person name="Haugen E."/>
            <person name="Heath P.D."/>
            <person name="Holmes S."/>
            <person name="Holt K."/>
            <person name="Howden P.J."/>
            <person name="Hunt A.R."/>
            <person name="Hunt S.E."/>
            <person name="Hunter G."/>
            <person name="Isherwood J."/>
            <person name="James R."/>
            <person name="Johnson C."/>
            <person name="Johnson D."/>
            <person name="Joy A."/>
            <person name="Kay M."/>
            <person name="Kershaw J.K."/>
            <person name="Kibukawa M."/>
            <person name="Kimberley A.M."/>
            <person name="King A."/>
            <person name="Knights A.J."/>
            <person name="Lad H."/>
            <person name="Laird G."/>
            <person name="Lawlor S."/>
            <person name="Leongamornlert D.A."/>
            <person name="Lloyd D.M."/>
            <person name="Loveland J."/>
            <person name="Lovell J."/>
            <person name="Lush M.J."/>
            <person name="Lyne R."/>
            <person name="Martin S."/>
            <person name="Mashreghi-Mohammadi M."/>
            <person name="Matthews L."/>
            <person name="Matthews N.S.W."/>
            <person name="McLaren S."/>
            <person name="Milne S."/>
            <person name="Mistry S."/>
            <person name="Moore M.J.F."/>
            <person name="Nickerson T."/>
            <person name="O'Dell C.N."/>
            <person name="Oliver K."/>
            <person name="Palmeiri A."/>
            <person name="Palmer S.A."/>
            <person name="Parker A."/>
            <person name="Patel D."/>
            <person name="Pearce A.V."/>
            <person name="Peck A.I."/>
            <person name="Pelan S."/>
            <person name="Phelps K."/>
            <person name="Phillimore B.J."/>
            <person name="Plumb R."/>
            <person name="Rajan J."/>
            <person name="Raymond C."/>
            <person name="Rouse G."/>
            <person name="Saenphimmachak C."/>
            <person name="Sehra H.K."/>
            <person name="Sheridan E."/>
            <person name="Shownkeen R."/>
            <person name="Sims S."/>
            <person name="Skuce C.D."/>
            <person name="Smith M."/>
            <person name="Steward C."/>
            <person name="Subramanian S."/>
            <person name="Sycamore N."/>
            <person name="Tracey A."/>
            <person name="Tromans A."/>
            <person name="Van Helmond Z."/>
            <person name="Wall M."/>
            <person name="Wallis J.M."/>
            <person name="White S."/>
            <person name="Whitehead S.L."/>
            <person name="Wilkinson J.E."/>
            <person name="Willey D.L."/>
            <person name="Williams H."/>
            <person name="Wilming L."/>
            <person name="Wray P.W."/>
            <person name="Wu Z."/>
            <person name="Coulson A."/>
            <person name="Vaudin M."/>
            <person name="Sulston J.E."/>
            <person name="Durbin R.M."/>
            <person name="Hubbard T."/>
            <person name="Wooster R."/>
            <person name="Dunham I."/>
            <person name="Carter N.P."/>
            <person name="McVean G."/>
            <person name="Ross M.T."/>
            <person name="Harrow J."/>
            <person name="Olson M.V."/>
            <person name="Beck S."/>
            <person name="Rogers J."/>
            <person name="Bentley D.R."/>
        </authorList>
    </citation>
    <scope>NUCLEOTIDE SEQUENCE [LARGE SCALE GENOMIC DNA]</scope>
</reference>
<reference key="9">
    <citation type="journal article" date="1996" name="J. Urol.">
        <title>Towards a comprehensive database of proteins from the urine of patients with bladder cancer.</title>
        <authorList>
            <person name="Rasmussen H.H."/>
            <person name="Orntoft T.F."/>
            <person name="Wolf H."/>
            <person name="Celis J.E."/>
        </authorList>
    </citation>
    <scope>PROTEIN SEQUENCE OF 30-45</scope>
    <source>
        <tissue>Urine</tissue>
    </source>
</reference>
<reference key="10">
    <citation type="journal article" date="2001" name="Genes Immun.">
        <title>The human gene for mannan-binding lectin-associated serine protease-2 (MASP-2), the effector component of the lectin route of complement activation, is part of a tightly linked gene cluster on chromosome 1p36.2-3.</title>
        <authorList>
            <person name="Stover C."/>
            <person name="Endo Y."/>
            <person name="Takahashi M."/>
            <person name="Lynch N."/>
            <person name="Constantinescu C."/>
            <person name="Vorup-Jensen T."/>
            <person name="Thiel S."/>
            <person name="Friedl H."/>
            <person name="Hankeln T."/>
            <person name="Hall R."/>
            <person name="Gregory S."/>
            <person name="Fujita T."/>
            <person name="Schwaeble W."/>
        </authorList>
    </citation>
    <scope>NUCLEOTIDE SEQUENCE [GENOMIC DNA] OF 149-284 AND 364-686</scope>
    <scope>VARIANT ALA-377</scope>
</reference>
<reference key="11">
    <citation type="journal article" date="2000" name="J. Immunol.">
        <title>Proteolytic activities of two types of mannose-binding lectin-associated serine protease.</title>
        <authorList>
            <person name="Matsushita M."/>
            <person name="Thiel S."/>
            <person name="Jensenius J.C."/>
            <person name="Terai I."/>
            <person name="Fujita T."/>
        </authorList>
    </citation>
    <scope>FUNCTION</scope>
    <scope>INTERACTION WITH SERPING1</scope>
</reference>
<reference key="12">
    <citation type="journal article" date="2004" name="J. Biol. Chem.">
        <title>The X-ray structure of human mannan-binding lectin-associated protein 19 (MAp19) and its interaction site with mannan-binding lectin and L-ficolin.</title>
        <authorList>
            <person name="Gregory L.A."/>
            <person name="Thielens N.M."/>
            <person name="Matsushita M."/>
            <person name="Sorensen R."/>
            <person name="Arlaud G.J."/>
            <person name="Fontecilla-Camps J.-C."/>
            <person name="Gaboriaud C."/>
        </authorList>
    </citation>
    <scope>X-RAY CRYSTALLOGRAPHY (2.5 ANGSTROMS) OF 16-181 (ISOFORM 2)</scope>
    <scope>CHARACTERIZATION OF VARIANT GLY-120</scope>
    <scope>CALCIUM-BINDING SITES</scope>
    <scope>DIMERIZATION</scope>
    <scope>MUTAGENESIS OF TYR-74; TYR-121 AND GLU-124</scope>
    <scope>INTERACTION WITH MBL2 AND FCN2</scope>
    <scope>DISULFIDE BONDS</scope>
</reference>
<reference key="13">
    <citation type="journal article" date="2004" name="J. Mol. Biol.">
        <title>The structure of MBL-associated serine protease-2 reveals that identical substrate specificities of C1s and MASP-2 are realized through different sets of enzyme-substrate interactions.</title>
        <authorList>
            <person name="Harmat V."/>
            <person name="Gal P."/>
            <person name="Kardos J."/>
            <person name="Szilagyi K."/>
            <person name="Ambrus G."/>
            <person name="Vegh B."/>
            <person name="Naray-Szabo G."/>
            <person name="Zavodszky P."/>
        </authorList>
    </citation>
    <scope>X-RAY CRYSTALLOGRAPHY (2.23 ANGSTROMS) OF 363-686</scope>
    <scope>DISULFIDE BONDS</scope>
</reference>
<reference key="14">
    <citation type="journal article" date="2005" name="J. Biol. Chem.">
        <title>A true autoactivating enzyme. Structural insight into mannose-binding lectin-associated serine protease-2 activations.</title>
        <authorList>
            <person name="Gal P."/>
            <person name="Harmat V."/>
            <person name="Kocsis A."/>
            <person name="Bian T."/>
            <person name="Barna L."/>
            <person name="Ambrus G."/>
            <person name="Vegh B."/>
            <person name="Balczer J."/>
            <person name="Sim R.B."/>
            <person name="Naray-Szabo G."/>
            <person name="Zavodszky P."/>
        </authorList>
    </citation>
    <scope>X-RAY CRYSTALLOGRAPHY (2.18 ANGSTROMS) OF 287-686</scope>
    <scope>AUTOCATALYTIC CLEAVAGE AT ARG-444</scope>
    <scope>MUTAGENESIS OF ARG-444</scope>
</reference>
<reference key="15">
    <citation type="journal article" date="2003" name="N. Engl. J. Med.">
        <title>Inherited deficiency of mannan-binding lectin-associated serine protease 2.</title>
        <authorList>
            <person name="Stengaard-Pedersen K."/>
            <person name="Thiel S."/>
            <person name="Gadjeva M."/>
            <person name="Moller-Kristensen M."/>
            <person name="Sorensen R."/>
            <person name="Jensen L.T."/>
            <person name="Sjoeholm A.G."/>
            <person name="Fugger L."/>
            <person name="Jensenius J.C."/>
        </authorList>
    </citation>
    <scope>VARIANT MASPD GLY-120</scope>
    <scope>CHARACTERIZATION OF VARIANT MASPD GLY-120</scope>
</reference>
<reference key="16">
    <citation type="journal article" date="2005" name="Tissue Antigens">
        <title>Novel MASP2 variants detected among North African and Sub-Saharan individuals.</title>
        <authorList>
            <person name="Lozano F."/>
            <person name="Suarez B."/>
            <person name="Munoz A."/>
            <person name="Jensenius J.C."/>
            <person name="Mensa J."/>
            <person name="Vives J."/>
            <person name="Horcajada J.P."/>
        </authorList>
    </citation>
    <scope>VARIANTS GLN-99; CYS-118; GLY-120 AND LEU-126</scope>
</reference>
<reference key="17">
    <citation type="journal article" date="2007" name="Genes Immun.">
        <title>Deficiency of mannan-binding lectin associated serine protease-2 due to missense polymorphisms.</title>
        <authorList>
            <person name="Thiel S."/>
            <person name="Steffensen R."/>
            <person name="Christensen I.J."/>
            <person name="Ip W.K."/>
            <person name="Lau Y.L."/>
            <person name="Reason I.J."/>
            <person name="Eiberg H."/>
            <person name="Gadjeva M."/>
            <person name="Ruseva M."/>
            <person name="Jensenius J.C."/>
        </authorList>
    </citation>
    <scope>VARIANTS MASPD GLY-120; LEU-126 AND HIS-ASN-HIS-156 INS</scope>
    <scope>VARIANTS GLN-99; CYS-118 AND ALA-377</scope>
    <scope>CHARACTERIZATION OF VARIANT ALA-377</scope>
</reference>
<reference key="18">
    <citation type="journal article" date="2015" name="Clin. Genet.">
        <title>A homozygous mutation in SLC1A4 in siblings with severe intellectual disability and microcephaly.</title>
        <authorList>
            <person name="Srour M."/>
            <person name="Hamdan F.F."/>
            <person name="Gan-Or Z."/>
            <person name="Labuda D."/>
            <person name="Nassif C."/>
            <person name="Oskoui M."/>
            <person name="Gana-Weisz M."/>
            <person name="Orr-Urtreger A."/>
            <person name="Rouleau G.A."/>
            <person name="Michaud J.L."/>
        </authorList>
    </citation>
    <scope>VARIANTS MET-128 AND MET-405</scope>
</reference>
<proteinExistence type="evidence at protein level"/>
<organism>
    <name type="scientific">Homo sapiens</name>
    <name type="common">Human</name>
    <dbReference type="NCBI Taxonomy" id="9606"/>
    <lineage>
        <taxon>Eukaryota</taxon>
        <taxon>Metazoa</taxon>
        <taxon>Chordata</taxon>
        <taxon>Craniata</taxon>
        <taxon>Vertebrata</taxon>
        <taxon>Euteleostomi</taxon>
        <taxon>Mammalia</taxon>
        <taxon>Eutheria</taxon>
        <taxon>Euarchontoglires</taxon>
        <taxon>Primates</taxon>
        <taxon>Haplorrhini</taxon>
        <taxon>Catarrhini</taxon>
        <taxon>Hominidae</taxon>
        <taxon>Homo</taxon>
    </lineage>
</organism>
<feature type="signal peptide" evidence="2">
    <location>
        <begin position="1"/>
        <end position="15"/>
    </location>
</feature>
<feature type="chain" id="PRO_0000027598" description="Mannan-binding lectin serine protease 2">
    <location>
        <begin position="16"/>
        <end position="686"/>
    </location>
</feature>
<feature type="chain" id="PRO_0000027599" description="Mannan-binding lectin serine protease 2 A chain">
    <location>
        <begin position="16"/>
        <end position="444"/>
    </location>
</feature>
<feature type="chain" id="PRO_0000027600" description="Mannan-binding lectin serine protease 2 B chain">
    <location>
        <begin position="445"/>
        <end position="686"/>
    </location>
</feature>
<feature type="domain" description="CUB 1" evidence="3">
    <location>
        <begin position="16"/>
        <end position="137"/>
    </location>
</feature>
<feature type="domain" description="EGF-like; calcium-binding">
    <location>
        <begin position="138"/>
        <end position="181"/>
    </location>
</feature>
<feature type="domain" description="CUB 2" evidence="3">
    <location>
        <begin position="184"/>
        <end position="296"/>
    </location>
</feature>
<feature type="domain" description="Sushi 1" evidence="5">
    <location>
        <begin position="298"/>
        <end position="363"/>
    </location>
</feature>
<feature type="domain" description="Sushi 2" evidence="5">
    <location>
        <begin position="364"/>
        <end position="432"/>
    </location>
</feature>
<feature type="domain" description="Peptidase S1" evidence="4">
    <location>
        <begin position="445"/>
        <end position="684"/>
    </location>
</feature>
<feature type="active site" description="Charge relay system">
    <location>
        <position position="483"/>
    </location>
</feature>
<feature type="active site" description="Charge relay system">
    <location>
        <position position="532"/>
    </location>
</feature>
<feature type="active site" description="Charge relay system">
    <location>
        <position position="633"/>
    </location>
</feature>
<feature type="binding site">
    <location>
        <position position="67"/>
    </location>
    <ligand>
        <name>Ca(2+)</name>
        <dbReference type="ChEBI" id="CHEBI:29108"/>
        <label>1</label>
    </ligand>
</feature>
<feature type="binding site">
    <location>
        <position position="75"/>
    </location>
    <ligand>
        <name>Ca(2+)</name>
        <dbReference type="ChEBI" id="CHEBI:29108"/>
        <label>1</label>
    </ligand>
</feature>
<feature type="binding site">
    <location>
        <position position="120"/>
    </location>
    <ligand>
        <name>Ca(2+)</name>
        <dbReference type="ChEBI" id="CHEBI:29108"/>
        <label>1</label>
    </ligand>
</feature>
<feature type="binding site">
    <location>
        <position position="122"/>
    </location>
    <ligand>
        <name>Ca(2+)</name>
        <dbReference type="ChEBI" id="CHEBI:29108"/>
        <label>1</label>
    </ligand>
</feature>
<feature type="binding site">
    <location>
        <position position="123"/>
    </location>
    <ligand>
        <name>Ca(2+)</name>
        <dbReference type="ChEBI" id="CHEBI:29108"/>
        <label>1</label>
    </ligand>
</feature>
<feature type="binding site">
    <location>
        <position position="138"/>
    </location>
    <ligand>
        <name>Ca(2+)</name>
        <dbReference type="ChEBI" id="CHEBI:29108"/>
        <label>2</label>
    </ligand>
</feature>
<feature type="binding site">
    <location>
        <position position="139"/>
    </location>
    <ligand>
        <name>Ca(2+)</name>
        <dbReference type="ChEBI" id="CHEBI:29108"/>
        <label>2</label>
    </ligand>
</feature>
<feature type="binding site">
    <location>
        <position position="141"/>
    </location>
    <ligand>
        <name>Ca(2+)</name>
        <dbReference type="ChEBI" id="CHEBI:29108"/>
        <label>2</label>
    </ligand>
</feature>
<feature type="binding site">
    <location>
        <position position="158"/>
    </location>
    <ligand>
        <name>Ca(2+)</name>
        <dbReference type="ChEBI" id="CHEBI:29108"/>
        <label>2</label>
    </ligand>
</feature>
<feature type="binding site">
    <location>
        <position position="159"/>
    </location>
    <ligand>
        <name>Ca(2+)</name>
        <dbReference type="ChEBI" id="CHEBI:29108"/>
        <label>2</label>
    </ligand>
</feature>
<feature type="binding site">
    <location>
        <position position="162"/>
    </location>
    <ligand>
        <name>Ca(2+)</name>
        <dbReference type="ChEBI" id="CHEBI:29108"/>
        <label>2</label>
    </ligand>
</feature>
<feature type="site" description="Cleavage; by autolysis" evidence="12">
    <location>
        <begin position="444"/>
        <end position="445"/>
    </location>
</feature>
<feature type="modified residue" description="(3R)-3-hydroxyasparagine" evidence="2">
    <location>
        <position position="158"/>
    </location>
</feature>
<feature type="disulfide bond">
    <location>
        <begin position="72"/>
        <end position="90"/>
    </location>
</feature>
<feature type="disulfide bond">
    <location>
        <begin position="142"/>
        <end position="156"/>
    </location>
</feature>
<feature type="disulfide bond">
    <location>
        <begin position="152"/>
        <end position="165"/>
    </location>
</feature>
<feature type="disulfide bond">
    <location>
        <begin position="167"/>
        <end position="180"/>
    </location>
</feature>
<feature type="disulfide bond" evidence="1">
    <location>
        <begin position="184"/>
        <end position="211"/>
    </location>
</feature>
<feature type="disulfide bond" evidence="1">
    <location>
        <begin position="241"/>
        <end position="259"/>
    </location>
</feature>
<feature type="disulfide bond" evidence="1">
    <location>
        <begin position="300"/>
        <end position="348"/>
    </location>
</feature>
<feature type="disulfide bond" evidence="1">
    <location>
        <begin position="328"/>
        <end position="361"/>
    </location>
</feature>
<feature type="disulfide bond">
    <location>
        <begin position="366"/>
        <end position="412"/>
    </location>
</feature>
<feature type="disulfide bond">
    <location>
        <begin position="396"/>
        <end position="430"/>
    </location>
</feature>
<feature type="disulfide bond" description="Interchain (between A and B chains)">
    <location>
        <begin position="434"/>
        <end position="552"/>
    </location>
</feature>
<feature type="disulfide bond">
    <location>
        <begin position="598"/>
        <end position="618"/>
    </location>
</feature>
<feature type="disulfide bond">
    <location>
        <begin position="629"/>
        <end position="660"/>
    </location>
</feature>
<feature type="splice variant" id="VSP_005383" description="In isoform 2." evidence="16 17">
    <original>ALCS</original>
    <variation>EQSL</variation>
    <location>
        <begin position="182"/>
        <end position="185"/>
    </location>
</feature>
<feature type="splice variant" id="VSP_005384" description="In isoform 2." evidence="16 17">
    <location>
        <begin position="186"/>
        <end position="686"/>
    </location>
</feature>
<feature type="sequence variant" id="VAR_025344" description="In dbSNP:rs61735600." evidence="11 13">
    <original>R</original>
    <variation>Q</variation>
    <location>
        <position position="99"/>
    </location>
</feature>
<feature type="sequence variant" id="VAR_025345" description="In dbSNP:rs147270785." evidence="11 13">
    <original>R</original>
    <variation>C</variation>
    <location>
        <position position="118"/>
    </location>
</feature>
<feature type="sequence variant" id="VAR_025346" description="In MASPD; uncertain significance; strongly decreases affinity for MBL2 and FCN2; dbSNP:rs72550870." evidence="8 9 11 13">
    <original>D</original>
    <variation>G</variation>
    <location>
        <position position="120"/>
    </location>
</feature>
<feature type="sequence variant" id="VAR_025347" description="In MASPD; likely benign; dbSNP:rs56392418." evidence="11 13">
    <original>P</original>
    <variation>L</variation>
    <location>
        <position position="126"/>
    </location>
</feature>
<feature type="sequence variant" id="VAR_075087" description="In dbSNP:rs141145402." evidence="14">
    <original>T</original>
    <variation>M</variation>
    <location>
        <position position="128"/>
    </location>
</feature>
<feature type="sequence variant" id="VAR_028784" description="In dbSNP:rs2273343.">
    <original>H</original>
    <variation>R</variation>
    <location>
        <position position="155"/>
    </location>
</feature>
<feature type="sequence variant" id="VAR_065814" description="In MASPD.">
    <original>C</original>
    <variation>CHNH</variation>
    <location>
        <position position="156"/>
    </location>
</feature>
<feature type="sequence variant" id="VAR_028785" description="In dbSNP:rs12711521." evidence="15">
    <original>D</original>
    <variation>Y</variation>
    <location>
        <position position="371"/>
    </location>
</feature>
<feature type="sequence variant" id="VAR_028786" description="No effect on catalytic activity; dbSNP:rs2273346." evidence="7 13">
    <original>V</original>
    <variation>A</variation>
    <location>
        <position position="377"/>
    </location>
</feature>
<feature type="sequence variant" id="VAR_075088" description="In dbSNP:rs61735594." evidence="14">
    <original>V</original>
    <variation>M</variation>
    <location>
        <position position="405"/>
    </location>
</feature>
<feature type="sequence variant" id="VAR_028787" description="In dbSNP:rs12085877.">
    <original>R</original>
    <variation>H</variation>
    <location>
        <position position="439"/>
    </location>
</feature>
<feature type="mutagenesis site" description="Strongly decreases affinity for MBL2. Decreases affinity for FCN2." evidence="9">
    <original>Y</original>
    <variation>A</variation>
    <location>
        <position position="74"/>
    </location>
</feature>
<feature type="mutagenesis site" description="Strongly decreases affinity for MBL2, but not for FCN2." evidence="9">
    <original>Y</original>
    <variation>A</variation>
    <location>
        <position position="121"/>
    </location>
</feature>
<feature type="mutagenesis site" description="Decreases affinity for MBL2. Slight decrease in affinity for FCN2." evidence="9">
    <original>E</original>
    <variation>A</variation>
    <location>
        <position position="124"/>
    </location>
</feature>
<feature type="mutagenesis site" description="Abolishes autocatalytic cleavage." evidence="12">
    <original>R</original>
    <variation>Q</variation>
    <location>
        <position position="444"/>
    </location>
</feature>
<feature type="sequence conflict" description="In Ref. 7; BAF83512." evidence="18" ref="7">
    <original>N</original>
    <variation>S</variation>
    <location>
        <position position="41"/>
    </location>
</feature>
<feature type="sequence conflict" description="In Ref. 7; BAF83512." evidence="18" ref="7">
    <original>L</original>
    <variation>P</variation>
    <location>
        <position position="225"/>
    </location>
</feature>
<feature type="sequence conflict" description="In Ref. 1; CAA71059, 3; CAB50733/CAB50735, 4; CAA67050 and 6; AAG50274." evidence="18" ref="1 3 4 6">
    <original>QP</original>
    <variation>HA</variation>
    <location>
        <begin position="298"/>
        <end position="299"/>
    </location>
</feature>
<feature type="sequence conflict" description="In Ref. 3; CAB50733/CAB50735." evidence="18" ref="3">
    <location>
        <begin position="361"/>
        <end position="362"/>
    </location>
</feature>
<feature type="sequence conflict" description="In Ref. 3; CAB50733/CAB50735." evidence="18" ref="3">
    <original>L</original>
    <variation>LCS</variation>
    <location>
        <position position="372"/>
    </location>
</feature>
<feature type="sequence conflict" description="In Ref. 7; BAF83512." evidence="18" ref="7">
    <original>T</original>
    <variation>A</variation>
    <location>
        <position position="399"/>
    </location>
</feature>
<feature type="sequence conflict" description="In Ref. 6; AAG50274." evidence="18" ref="6">
    <original>G</original>
    <variation>E</variation>
    <location>
        <position position="442"/>
    </location>
</feature>
<feature type="sequence conflict" description="In Ref. 6; AAG50274." evidence="18" ref="6">
    <original>G</original>
    <variation>E</variation>
    <location>
        <position position="447"/>
    </location>
</feature>
<feature type="sequence conflict" description="In Ref. 3; CAB50733/CAB50735." evidence="18" ref="3">
    <location>
        <begin position="461"/>
        <end position="462"/>
    </location>
</feature>
<feature type="sequence conflict" description="In Ref. 3; CAB50733/CAB50735." evidence="18" ref="3">
    <original>L</original>
    <variation>LIL</variation>
    <location>
        <position position="473"/>
    </location>
</feature>
<feature type="strand" evidence="19">
    <location>
        <begin position="27"/>
        <end position="31"/>
    </location>
</feature>
<feature type="turn" evidence="19">
    <location>
        <begin position="33"/>
        <end position="36"/>
    </location>
</feature>
<feature type="strand" evidence="19">
    <location>
        <begin position="44"/>
        <end position="50"/>
    </location>
</feature>
<feature type="strand" evidence="19">
    <location>
        <begin position="55"/>
        <end position="65"/>
    </location>
</feature>
<feature type="strand" evidence="19">
    <location>
        <begin position="74"/>
        <end position="89"/>
    </location>
</feature>
<feature type="turn" evidence="19">
    <location>
        <begin position="93"/>
        <end position="96"/>
    </location>
</feature>
<feature type="strand" evidence="19">
    <location>
        <begin position="98"/>
        <end position="100"/>
    </location>
</feature>
<feature type="strand" evidence="19">
    <location>
        <begin position="109"/>
        <end position="118"/>
    </location>
</feature>
<feature type="strand" evidence="19">
    <location>
        <begin position="129"/>
        <end position="138"/>
    </location>
</feature>
<feature type="strand" evidence="19">
    <location>
        <begin position="151"/>
        <end position="159"/>
    </location>
</feature>
<feature type="strand" evidence="19">
    <location>
        <begin position="162"/>
        <end position="166"/>
    </location>
</feature>
<feature type="strand" evidence="19">
    <location>
        <begin position="171"/>
        <end position="173"/>
    </location>
</feature>
<feature type="strand" evidence="20">
    <location>
        <begin position="309"/>
        <end position="313"/>
    </location>
</feature>
<feature type="strand" evidence="20">
    <location>
        <begin position="323"/>
        <end position="328"/>
    </location>
</feature>
<feature type="strand" evidence="20">
    <location>
        <begin position="332"/>
        <end position="336"/>
    </location>
</feature>
<feature type="strand" evidence="20">
    <location>
        <begin position="345"/>
        <end position="348"/>
    </location>
</feature>
<feature type="strand" evidence="20">
    <location>
        <begin position="350"/>
        <end position="356"/>
    </location>
</feature>
<feature type="strand" evidence="20">
    <location>
        <begin position="360"/>
        <end position="363"/>
    </location>
</feature>
<feature type="strand" evidence="21">
    <location>
        <begin position="375"/>
        <end position="382"/>
    </location>
</feature>
<feature type="strand" evidence="21">
    <location>
        <begin position="391"/>
        <end position="396"/>
    </location>
</feature>
<feature type="turn" evidence="21">
    <location>
        <begin position="398"/>
        <end position="400"/>
    </location>
</feature>
<feature type="strand" evidence="21">
    <location>
        <begin position="401"/>
        <end position="403"/>
    </location>
</feature>
<feature type="strand" evidence="21">
    <location>
        <begin position="409"/>
        <end position="412"/>
    </location>
</feature>
<feature type="strand" evidence="21">
    <location>
        <begin position="416"/>
        <end position="420"/>
    </location>
</feature>
<feature type="strand" evidence="21">
    <location>
        <begin position="430"/>
        <end position="432"/>
    </location>
</feature>
<feature type="strand" evidence="21">
    <location>
        <begin position="459"/>
        <end position="473"/>
    </location>
</feature>
<feature type="turn" evidence="21">
    <location>
        <begin position="474"/>
        <end position="476"/>
    </location>
</feature>
<feature type="strand" evidence="21">
    <location>
        <begin position="477"/>
        <end position="480"/>
    </location>
</feature>
<feature type="helix" evidence="21">
    <location>
        <begin position="482"/>
        <end position="485"/>
    </location>
</feature>
<feature type="turn" evidence="21">
    <location>
        <begin position="487"/>
        <end position="490"/>
    </location>
</feature>
<feature type="strand" evidence="21">
    <location>
        <begin position="496"/>
        <end position="500"/>
    </location>
</feature>
<feature type="strand" evidence="21">
    <location>
        <begin position="510"/>
        <end position="519"/>
    </location>
</feature>
<feature type="strand" evidence="21">
    <location>
        <begin position="534"/>
        <end position="540"/>
    </location>
</feature>
<feature type="helix" evidence="21">
    <location>
        <begin position="558"/>
        <end position="561"/>
    </location>
</feature>
<feature type="strand" evidence="21">
    <location>
        <begin position="567"/>
        <end position="573"/>
    </location>
</feature>
<feature type="strand" evidence="20">
    <location>
        <begin position="577"/>
        <end position="579"/>
    </location>
</feature>
<feature type="strand" evidence="21">
    <location>
        <begin position="586"/>
        <end position="592"/>
    </location>
</feature>
<feature type="helix" evidence="21">
    <location>
        <begin position="595"/>
        <end position="603"/>
    </location>
</feature>
<feature type="strand" evidence="20">
    <location>
        <begin position="604"/>
        <end position="606"/>
    </location>
</feature>
<feature type="strand" evidence="21">
    <location>
        <begin position="616"/>
        <end position="620"/>
    </location>
</feature>
<feature type="strand" evidence="21">
    <location>
        <begin position="636"/>
        <end position="641"/>
    </location>
</feature>
<feature type="turn" evidence="21">
    <location>
        <begin position="642"/>
        <end position="645"/>
    </location>
</feature>
<feature type="strand" evidence="21">
    <location>
        <begin position="646"/>
        <end position="659"/>
    </location>
</feature>
<feature type="strand" evidence="21">
    <location>
        <begin position="667"/>
        <end position="671"/>
    </location>
</feature>
<feature type="helix" evidence="21">
    <location>
        <begin position="672"/>
        <end position="675"/>
    </location>
</feature>
<feature type="helix" evidence="21">
    <location>
        <begin position="676"/>
        <end position="685"/>
    </location>
</feature>
<name>MASP2_HUMAN</name>
<accession>O00187</accession>
<accession>A8K458</accession>
<accession>A8MWJ2</accession>
<accession>O75754</accession>
<accession>Q5TEQ5</accession>
<accession>Q5TER0</accession>
<accession>Q96QG4</accession>
<accession>Q9BZH0</accession>
<accession>Q9H498</accession>
<accession>Q9H499</accession>
<accession>Q9UBP3</accession>
<accession>Q9UC48</accession>
<accession>Q9ULC7</accession>
<accession>Q9UMV3</accession>
<accession>Q9Y270</accession>
<comment type="function">
    <text evidence="6">Serum protease that plays an important role in the activation of the complement system via mannose-binding lectin. After activation by auto-catalytic cleavage it cleaves C2 and C4, leading to their activation and to the formation of C3 convertase.</text>
</comment>
<comment type="catalytic activity">
    <reaction>
        <text>Selective cleavage after Arg-223 in complement component C2 (-Ser-Leu-Gly-Arg-|-Lys-Ile-Gln-Ile) and after Arg-76 in complement component C4 (-Gly-Leu-Gln-Arg-|-Ala-Leu-Glu-Ile).</text>
        <dbReference type="EC" id="3.4.21.104"/>
    </reaction>
</comment>
<comment type="subunit">
    <text evidence="6 9 10">Homodimer; disulfide-linked. Binds MBL2. Isoform 2 binds to MASP1. Binds SERPING1. Dimerization and MBL2 binding requires calcium ions.</text>
</comment>
<comment type="interaction">
    <interactant intactId="EBI-7965040">
        <id>O00187</id>
    </interactant>
    <interactant intactId="EBI-25809731">
        <id>Q9BWP8</id>
        <label>COLEC11</label>
    </interactant>
    <organismsDiffer>false</organismsDiffer>
    <experiments>3</experiments>
</comment>
<comment type="interaction">
    <interactant intactId="EBI-7965040">
        <id>O00187</id>
    </interactant>
    <interactant intactId="EBI-5325353">
        <id>P11226</id>
        <label>MBL2</label>
    </interactant>
    <organismsDiffer>false</organismsDiffer>
    <experiments>6</experiments>
</comment>
<comment type="interaction">
    <interactant intactId="EBI-7965040">
        <id>O00187</id>
    </interactant>
    <interactant intactId="EBI-1223454">
        <id>P05155</id>
        <label>SERPING1</label>
    </interactant>
    <organismsDiffer>false</organismsDiffer>
    <experiments>3</experiments>
</comment>
<comment type="interaction">
    <interactant intactId="EBI-7965040">
        <id>O00187</id>
    </interactant>
    <interactant intactId="EBI-26369106">
        <id>PRO_0000042699</id>
        <dbReference type="UniProtKB" id="P0C0L5"/>
    </interactant>
    <organismsDiffer>false</organismsDiffer>
    <experiments>4</experiments>
</comment>
<comment type="interaction">
    <interactant intactId="EBI-26357096">
        <id>O00187-1</id>
    </interactant>
    <interactant intactId="EBI-16138717">
        <id>P48740-1</id>
        <label>MASP1</label>
    </interactant>
    <organismsDiffer>false</organismsDiffer>
    <experiments>8</experiments>
</comment>
<comment type="interaction">
    <interactant intactId="EBI-26357096">
        <id>O00187-1</id>
    </interactant>
    <interactant intactId="EBI-26435098">
        <id>P48740-2</id>
        <label>MASP1</label>
    </interactant>
    <organismsDiffer>false</organismsDiffer>
    <experiments>4</experiments>
</comment>
<comment type="interaction">
    <interactant intactId="EBI-26357096">
        <id>O00187-1</id>
    </interactant>
    <interactant intactId="EBI-26435118">
        <id>P48740-3</id>
        <label>MASP1</label>
    </interactant>
    <organismsDiffer>false</organismsDiffer>
    <experiments>7</experiments>
</comment>
<comment type="interaction">
    <interactant intactId="EBI-26356134">
        <id>O00187-2</id>
    </interactant>
    <interactant intactId="EBI-26356134">
        <id>O00187-2</id>
        <label>MASP2</label>
    </interactant>
    <organismsDiffer>false</organismsDiffer>
    <experiments>2</experiments>
</comment>
<comment type="interaction">
    <interactant intactId="EBI-26356134">
        <id>O00187-2</id>
    </interactant>
    <interactant intactId="EBI-5325353">
        <id>P11226</id>
        <label>MBL2</label>
    </interactant>
    <organismsDiffer>false</organismsDiffer>
    <experiments>5</experiments>
</comment>
<comment type="interaction">
    <interactant intactId="EBI-25426044">
        <id>PRO_0000027598</id>
    </interactant>
    <interactant intactId="EBI-5325353">
        <id>P11226</id>
        <label>MBL2</label>
    </interactant>
    <organismsDiffer>false</organismsDiffer>
    <experiments>2</experiments>
</comment>
<comment type="subcellular location">
    <subcellularLocation>
        <location>Secreted</location>
    </subcellularLocation>
</comment>
<comment type="alternative products">
    <event type="alternative splicing"/>
    <isoform>
        <id>O00187-1</id>
        <name>1</name>
        <sequence type="displayed"/>
    </isoform>
    <isoform>
        <id>O00187-2</id>
        <name>2</name>
        <name>MAp19</name>
        <name>Small MBL-associated protein</name>
        <name>sMAP</name>
        <sequence type="described" ref="VSP_005383 VSP_005384"/>
    </isoform>
</comment>
<comment type="tissue specificity">
    <text>Plasma.</text>
</comment>
<comment type="PTM">
    <text evidence="1">The iron and 2-oxoglutarate dependent 3-hydroxylation of aspartate and asparagine is (R) stereospecific within EGF domains.</text>
</comment>
<comment type="PTM">
    <text>Activated by cleavage after Arg-444. The uncleaved zymogen is inactive towards synthetic substrates, but has sufficient activity to effect autocatalytic cleavage.</text>
</comment>
<comment type="disease" evidence="8 13">
    <disease id="DI-03105">
        <name>MASP2 deficiency</name>
        <acronym>MASPD</acronym>
        <description>A disorder that results in autoimmune manifestations, recurrent severe infections, and chronic inflammatory disease.</description>
        <dbReference type="MIM" id="613791"/>
    </disease>
    <text>The disease is caused by variants affecting the gene represented in this entry.</text>
</comment>
<comment type="similarity">
    <text evidence="4">Belongs to the peptidase S1 family.</text>
</comment>
<comment type="online information" name="MASP2base">
    <link uri="https://databases.lovd.nl/shared/genes/MASP2"/>
    <text>MASP2 mutation db</text>
</comment>
<protein>
    <recommendedName>
        <fullName>Mannan-binding lectin serine protease 2</fullName>
        <ecNumber>3.4.21.104</ecNumber>
    </recommendedName>
    <alternativeName>
        <fullName>MBL-associated serine protease 2</fullName>
    </alternativeName>
    <alternativeName>
        <fullName>Mannose-binding protein-associated serine protease 2</fullName>
        <shortName>MASP-2</shortName>
    </alternativeName>
    <component>
        <recommendedName>
            <fullName>Mannan-binding lectin serine protease 2 A chain</fullName>
        </recommendedName>
    </component>
    <component>
        <recommendedName>
            <fullName>Mannan-binding lectin serine protease 2 B chain</fullName>
        </recommendedName>
    </component>
</protein>
<keyword id="KW-0002">3D-structure</keyword>
<keyword id="KW-0025">Alternative splicing</keyword>
<keyword id="KW-0068">Autocatalytic cleavage</keyword>
<keyword id="KW-0106">Calcium</keyword>
<keyword id="KW-0180">Complement pathway</keyword>
<keyword id="KW-0903">Direct protein sequencing</keyword>
<keyword id="KW-0225">Disease variant</keyword>
<keyword id="KW-1015">Disulfide bond</keyword>
<keyword id="KW-0245">EGF-like domain</keyword>
<keyword id="KW-0378">Hydrolase</keyword>
<keyword id="KW-0379">Hydroxylation</keyword>
<keyword id="KW-0391">Immunity</keyword>
<keyword id="KW-0399">Innate immunity</keyword>
<keyword id="KW-0479">Metal-binding</keyword>
<keyword id="KW-0645">Protease</keyword>
<keyword id="KW-1267">Proteomics identification</keyword>
<keyword id="KW-1185">Reference proteome</keyword>
<keyword id="KW-0677">Repeat</keyword>
<keyword id="KW-0964">Secreted</keyword>
<keyword id="KW-0720">Serine protease</keyword>
<keyword id="KW-0732">Signal</keyword>
<keyword id="KW-0768">Sushi</keyword>
<gene>
    <name type="primary">MASP2</name>
</gene>